<reference key="1">
    <citation type="submission" date="2006-10" db="EMBL/GenBank/DDBJ databases">
        <authorList>
            <person name="Fleischmann R.D."/>
            <person name="Dodson R.J."/>
            <person name="Haft D.H."/>
            <person name="Merkel J.S."/>
            <person name="Nelson W.C."/>
            <person name="Fraser C.M."/>
        </authorList>
    </citation>
    <scope>NUCLEOTIDE SEQUENCE [LARGE SCALE GENOMIC DNA]</scope>
    <source>
        <strain>104</strain>
    </source>
</reference>
<sequence length="372" mass="38781">MKSSGAGAAFAGASVADAVPLAPLTTLRVGPTARRLITCASSEQVIATLRRLDTERLAGQRDPVLVFAGGSNLVISDALSDLTAVRLANDGITVEGNLVRAQAGAVWDDVVLTAIEHGLGGLECLSGIPGSAGATPIQNVGAYGAEVSDTLTRVRVLDRGSGQVRWVPGTELEFGYRTSVFKRRADDGLEIPSVVLEVEFALDASGRSAPVRYGELAAELEVPVGERADPRAVREAVLALRARKGMVLDAADHDTWSVGSFFTNPVVAPDVYERLAGSVDGPVPHYPAPGGVKLAAGWLVERAGFGKGYPVPDPGGPEAPCRLSTKHALALTNRGTARSDDVIALARTIRDGVRSVFGITLVPEPVLLGCRL</sequence>
<gene>
    <name evidence="1" type="primary">murB</name>
    <name type="ordered locus">MAV_4668</name>
</gene>
<organism>
    <name type="scientific">Mycobacterium avium (strain 104)</name>
    <dbReference type="NCBI Taxonomy" id="243243"/>
    <lineage>
        <taxon>Bacteria</taxon>
        <taxon>Bacillati</taxon>
        <taxon>Actinomycetota</taxon>
        <taxon>Actinomycetes</taxon>
        <taxon>Mycobacteriales</taxon>
        <taxon>Mycobacteriaceae</taxon>
        <taxon>Mycobacterium</taxon>
        <taxon>Mycobacterium avium complex (MAC)</taxon>
    </lineage>
</organism>
<feature type="chain" id="PRO_1000002896" description="UDP-N-acetylenolpyruvoylglucosamine reductase">
    <location>
        <begin position="1"/>
        <end position="372"/>
    </location>
</feature>
<feature type="domain" description="FAD-binding PCMH-type" evidence="1">
    <location>
        <begin position="29"/>
        <end position="205"/>
    </location>
</feature>
<feature type="active site" evidence="1">
    <location>
        <position position="177"/>
    </location>
</feature>
<feature type="active site" description="Proton donor" evidence="1">
    <location>
        <position position="260"/>
    </location>
</feature>
<feature type="active site" evidence="1">
    <location>
        <position position="364"/>
    </location>
</feature>
<comment type="function">
    <text evidence="1">Cell wall formation.</text>
</comment>
<comment type="catalytic activity">
    <reaction evidence="1">
        <text>UDP-N-acetyl-alpha-D-muramate + NADP(+) = UDP-N-acetyl-3-O-(1-carboxyvinyl)-alpha-D-glucosamine + NADPH + H(+)</text>
        <dbReference type="Rhea" id="RHEA:12248"/>
        <dbReference type="ChEBI" id="CHEBI:15378"/>
        <dbReference type="ChEBI" id="CHEBI:57783"/>
        <dbReference type="ChEBI" id="CHEBI:58349"/>
        <dbReference type="ChEBI" id="CHEBI:68483"/>
        <dbReference type="ChEBI" id="CHEBI:70757"/>
        <dbReference type="EC" id="1.3.1.98"/>
    </reaction>
</comment>
<comment type="cofactor">
    <cofactor evidence="1">
        <name>FAD</name>
        <dbReference type="ChEBI" id="CHEBI:57692"/>
    </cofactor>
</comment>
<comment type="pathway">
    <text evidence="1">Cell wall biogenesis; peptidoglycan biosynthesis.</text>
</comment>
<comment type="subcellular location">
    <subcellularLocation>
        <location evidence="1">Cytoplasm</location>
    </subcellularLocation>
</comment>
<comment type="similarity">
    <text evidence="1">Belongs to the MurB family.</text>
</comment>
<keyword id="KW-0131">Cell cycle</keyword>
<keyword id="KW-0132">Cell division</keyword>
<keyword id="KW-0133">Cell shape</keyword>
<keyword id="KW-0961">Cell wall biogenesis/degradation</keyword>
<keyword id="KW-0963">Cytoplasm</keyword>
<keyword id="KW-0274">FAD</keyword>
<keyword id="KW-0285">Flavoprotein</keyword>
<keyword id="KW-0521">NADP</keyword>
<keyword id="KW-0560">Oxidoreductase</keyword>
<keyword id="KW-0573">Peptidoglycan synthesis</keyword>
<accession>A0QLK9</accession>
<proteinExistence type="inferred from homology"/>
<protein>
    <recommendedName>
        <fullName evidence="1">UDP-N-acetylenolpyruvoylglucosamine reductase</fullName>
        <ecNumber evidence="1">1.3.1.98</ecNumber>
    </recommendedName>
    <alternativeName>
        <fullName evidence="1">UDP-N-acetylmuramate dehydrogenase</fullName>
    </alternativeName>
</protein>
<name>MURB_MYCA1</name>
<dbReference type="EC" id="1.3.1.98" evidence="1"/>
<dbReference type="EMBL" id="CP000479">
    <property type="protein sequence ID" value="ABK64563.1"/>
    <property type="molecule type" value="Genomic_DNA"/>
</dbReference>
<dbReference type="RefSeq" id="WP_009979314.1">
    <property type="nucleotide sequence ID" value="NC_008595.1"/>
</dbReference>
<dbReference type="SMR" id="A0QLK9"/>
<dbReference type="KEGG" id="mav:MAV_4668"/>
<dbReference type="HOGENOM" id="CLU_035304_0_1_11"/>
<dbReference type="UniPathway" id="UPA00219"/>
<dbReference type="Proteomes" id="UP000001574">
    <property type="component" value="Chromosome"/>
</dbReference>
<dbReference type="GO" id="GO:0005829">
    <property type="term" value="C:cytosol"/>
    <property type="evidence" value="ECO:0007669"/>
    <property type="project" value="TreeGrafter"/>
</dbReference>
<dbReference type="GO" id="GO:0071949">
    <property type="term" value="F:FAD binding"/>
    <property type="evidence" value="ECO:0007669"/>
    <property type="project" value="InterPro"/>
</dbReference>
<dbReference type="GO" id="GO:0008762">
    <property type="term" value="F:UDP-N-acetylmuramate dehydrogenase activity"/>
    <property type="evidence" value="ECO:0007669"/>
    <property type="project" value="UniProtKB-UniRule"/>
</dbReference>
<dbReference type="GO" id="GO:0051301">
    <property type="term" value="P:cell division"/>
    <property type="evidence" value="ECO:0007669"/>
    <property type="project" value="UniProtKB-KW"/>
</dbReference>
<dbReference type="GO" id="GO:0071555">
    <property type="term" value="P:cell wall organization"/>
    <property type="evidence" value="ECO:0007669"/>
    <property type="project" value="UniProtKB-KW"/>
</dbReference>
<dbReference type="GO" id="GO:0009252">
    <property type="term" value="P:peptidoglycan biosynthetic process"/>
    <property type="evidence" value="ECO:0007669"/>
    <property type="project" value="UniProtKB-UniRule"/>
</dbReference>
<dbReference type="GO" id="GO:0008360">
    <property type="term" value="P:regulation of cell shape"/>
    <property type="evidence" value="ECO:0007669"/>
    <property type="project" value="UniProtKB-KW"/>
</dbReference>
<dbReference type="Gene3D" id="3.30.465.10">
    <property type="match status" value="1"/>
</dbReference>
<dbReference type="Gene3D" id="3.90.78.10">
    <property type="entry name" value="UDP-N-acetylenolpyruvoylglucosamine reductase, C-terminal domain"/>
    <property type="match status" value="1"/>
</dbReference>
<dbReference type="Gene3D" id="3.30.43.10">
    <property type="entry name" value="Uridine Diphospho-n-acetylenolpyruvylglucosamine Reductase, domain 2"/>
    <property type="match status" value="1"/>
</dbReference>
<dbReference type="HAMAP" id="MF_00037">
    <property type="entry name" value="MurB"/>
    <property type="match status" value="1"/>
</dbReference>
<dbReference type="InterPro" id="IPR016166">
    <property type="entry name" value="FAD-bd_PCMH"/>
</dbReference>
<dbReference type="InterPro" id="IPR036318">
    <property type="entry name" value="FAD-bd_PCMH-like_sf"/>
</dbReference>
<dbReference type="InterPro" id="IPR016167">
    <property type="entry name" value="FAD-bd_PCMH_sub1"/>
</dbReference>
<dbReference type="InterPro" id="IPR016169">
    <property type="entry name" value="FAD-bd_PCMH_sub2"/>
</dbReference>
<dbReference type="InterPro" id="IPR003170">
    <property type="entry name" value="MurB"/>
</dbReference>
<dbReference type="InterPro" id="IPR011601">
    <property type="entry name" value="MurB_C"/>
</dbReference>
<dbReference type="InterPro" id="IPR036635">
    <property type="entry name" value="MurB_C_sf"/>
</dbReference>
<dbReference type="InterPro" id="IPR006094">
    <property type="entry name" value="Oxid_FAD_bind_N"/>
</dbReference>
<dbReference type="NCBIfam" id="NF010478">
    <property type="entry name" value="PRK13903.1"/>
    <property type="match status" value="1"/>
</dbReference>
<dbReference type="PANTHER" id="PTHR21071">
    <property type="entry name" value="UDP-N-ACETYLENOLPYRUVOYLGLUCOSAMINE REDUCTASE"/>
    <property type="match status" value="1"/>
</dbReference>
<dbReference type="PANTHER" id="PTHR21071:SF4">
    <property type="entry name" value="UDP-N-ACETYLENOLPYRUVOYLGLUCOSAMINE REDUCTASE"/>
    <property type="match status" value="1"/>
</dbReference>
<dbReference type="Pfam" id="PF01565">
    <property type="entry name" value="FAD_binding_4"/>
    <property type="match status" value="1"/>
</dbReference>
<dbReference type="Pfam" id="PF02873">
    <property type="entry name" value="MurB_C"/>
    <property type="match status" value="1"/>
</dbReference>
<dbReference type="SUPFAM" id="SSF56176">
    <property type="entry name" value="FAD-binding/transporter-associated domain-like"/>
    <property type="match status" value="1"/>
</dbReference>
<dbReference type="SUPFAM" id="SSF56194">
    <property type="entry name" value="Uridine diphospho-N-Acetylenolpyruvylglucosamine reductase, MurB, C-terminal domain"/>
    <property type="match status" value="1"/>
</dbReference>
<dbReference type="PROSITE" id="PS51387">
    <property type="entry name" value="FAD_PCMH"/>
    <property type="match status" value="1"/>
</dbReference>
<evidence type="ECO:0000255" key="1">
    <source>
        <dbReference type="HAMAP-Rule" id="MF_00037"/>
    </source>
</evidence>